<keyword id="KW-0133">Cell shape</keyword>
<keyword id="KW-0961">Cell wall biogenesis/degradation</keyword>
<keyword id="KW-0413">Isomerase</keyword>
<keyword id="KW-0573">Peptidoglycan synthesis</keyword>
<reference key="1">
    <citation type="journal article" date="2006" name="Lancet">
        <title>Complete genome sequence of USA300, an epidemic clone of community-acquired meticillin-resistant Staphylococcus aureus.</title>
        <authorList>
            <person name="Diep B.A."/>
            <person name="Gill S.R."/>
            <person name="Chang R.F."/>
            <person name="Phan T.H."/>
            <person name="Chen J.H."/>
            <person name="Davidson M.G."/>
            <person name="Lin F."/>
            <person name="Lin J."/>
            <person name="Carleton H.A."/>
            <person name="Mongodin E.F."/>
            <person name="Sensabaugh G.F."/>
            <person name="Perdreau-Remington F."/>
        </authorList>
    </citation>
    <scope>NUCLEOTIDE SEQUENCE [LARGE SCALE GENOMIC DNA]</scope>
    <source>
        <strain>USA300</strain>
    </source>
</reference>
<gene>
    <name evidence="1" type="primary">murI</name>
    <name type="ordered locus">SAUSA300_1049</name>
</gene>
<sequence>MNKPIGVIDSGVGGLTVAKEIMRQLPNETIYYLGDIGRCPYGPRPGEQVKQYTVEIARKLMEFDIKMLVIACNTATAVALEYLQKTLSIPVIGVIEPGARTAIMTTRNQNVLVLGTEGTIKSEAYRTHIKRINPHVEVHGVACPGFVPLVEQMRYSDPTITSIVIHQTLKRWRNSESDTVILGCTHYPLLYKPIYDYFGGKKTVISSGLETAREVSALLTFSNEHASYTEHPDHRFFATGDPTHITNIIKEWLNLSVNVERISVND</sequence>
<proteinExistence type="inferred from homology"/>
<protein>
    <recommendedName>
        <fullName evidence="1">Glutamate racemase</fullName>
        <ecNumber evidence="1">5.1.1.3</ecNumber>
    </recommendedName>
</protein>
<accession>Q2FHT1</accession>
<name>MURI_STAA3</name>
<feature type="chain" id="PRO_1000047615" description="Glutamate racemase">
    <location>
        <begin position="1"/>
        <end position="266"/>
    </location>
</feature>
<feature type="active site" description="Proton donor/acceptor" evidence="1">
    <location>
        <position position="72"/>
    </location>
</feature>
<feature type="active site" description="Proton donor/acceptor" evidence="1">
    <location>
        <position position="184"/>
    </location>
</feature>
<feature type="binding site" evidence="1">
    <location>
        <begin position="9"/>
        <end position="10"/>
    </location>
    <ligand>
        <name>substrate</name>
    </ligand>
</feature>
<feature type="binding site" evidence="1">
    <location>
        <begin position="41"/>
        <end position="42"/>
    </location>
    <ligand>
        <name>substrate</name>
    </ligand>
</feature>
<feature type="binding site" evidence="1">
    <location>
        <begin position="73"/>
        <end position="74"/>
    </location>
    <ligand>
        <name>substrate</name>
    </ligand>
</feature>
<feature type="binding site" evidence="1">
    <location>
        <begin position="185"/>
        <end position="186"/>
    </location>
    <ligand>
        <name>substrate</name>
    </ligand>
</feature>
<organism>
    <name type="scientific">Staphylococcus aureus (strain USA300)</name>
    <dbReference type="NCBI Taxonomy" id="367830"/>
    <lineage>
        <taxon>Bacteria</taxon>
        <taxon>Bacillati</taxon>
        <taxon>Bacillota</taxon>
        <taxon>Bacilli</taxon>
        <taxon>Bacillales</taxon>
        <taxon>Staphylococcaceae</taxon>
        <taxon>Staphylococcus</taxon>
    </lineage>
</organism>
<dbReference type="EC" id="5.1.1.3" evidence="1"/>
<dbReference type="EMBL" id="CP000255">
    <property type="protein sequence ID" value="ABD21903.1"/>
    <property type="molecule type" value="Genomic_DNA"/>
</dbReference>
<dbReference type="SMR" id="Q2FHT1"/>
<dbReference type="KEGG" id="saa:SAUSA300_1049"/>
<dbReference type="HOGENOM" id="CLU_052344_0_2_9"/>
<dbReference type="OMA" id="LDFFKPH"/>
<dbReference type="UniPathway" id="UPA00219"/>
<dbReference type="Proteomes" id="UP000001939">
    <property type="component" value="Chromosome"/>
</dbReference>
<dbReference type="GO" id="GO:0008881">
    <property type="term" value="F:glutamate racemase activity"/>
    <property type="evidence" value="ECO:0007669"/>
    <property type="project" value="UniProtKB-UniRule"/>
</dbReference>
<dbReference type="GO" id="GO:0071555">
    <property type="term" value="P:cell wall organization"/>
    <property type="evidence" value="ECO:0007669"/>
    <property type="project" value="UniProtKB-KW"/>
</dbReference>
<dbReference type="GO" id="GO:0009252">
    <property type="term" value="P:peptidoglycan biosynthetic process"/>
    <property type="evidence" value="ECO:0007669"/>
    <property type="project" value="UniProtKB-UniRule"/>
</dbReference>
<dbReference type="GO" id="GO:0008360">
    <property type="term" value="P:regulation of cell shape"/>
    <property type="evidence" value="ECO:0007669"/>
    <property type="project" value="UniProtKB-KW"/>
</dbReference>
<dbReference type="FunFam" id="3.40.50.1860:FF:000002">
    <property type="entry name" value="Glutamate racemase"/>
    <property type="match status" value="1"/>
</dbReference>
<dbReference type="Gene3D" id="3.40.50.1860">
    <property type="match status" value="2"/>
</dbReference>
<dbReference type="HAMAP" id="MF_00258">
    <property type="entry name" value="Glu_racemase"/>
    <property type="match status" value="1"/>
</dbReference>
<dbReference type="InterPro" id="IPR015942">
    <property type="entry name" value="Asp/Glu/hydantoin_racemase"/>
</dbReference>
<dbReference type="InterPro" id="IPR001920">
    <property type="entry name" value="Asp/Glu_race"/>
</dbReference>
<dbReference type="InterPro" id="IPR018187">
    <property type="entry name" value="Asp/Glu_racemase_AS_1"/>
</dbReference>
<dbReference type="InterPro" id="IPR033134">
    <property type="entry name" value="Asp/Glu_racemase_AS_2"/>
</dbReference>
<dbReference type="InterPro" id="IPR004391">
    <property type="entry name" value="Glu_race"/>
</dbReference>
<dbReference type="NCBIfam" id="TIGR00067">
    <property type="entry name" value="glut_race"/>
    <property type="match status" value="1"/>
</dbReference>
<dbReference type="NCBIfam" id="NF002035">
    <property type="entry name" value="PRK00865.1-3"/>
    <property type="match status" value="1"/>
</dbReference>
<dbReference type="PANTHER" id="PTHR21198">
    <property type="entry name" value="GLUTAMATE RACEMASE"/>
    <property type="match status" value="1"/>
</dbReference>
<dbReference type="PANTHER" id="PTHR21198:SF2">
    <property type="entry name" value="GLUTAMATE RACEMASE"/>
    <property type="match status" value="1"/>
</dbReference>
<dbReference type="Pfam" id="PF01177">
    <property type="entry name" value="Asp_Glu_race"/>
    <property type="match status" value="1"/>
</dbReference>
<dbReference type="SUPFAM" id="SSF53681">
    <property type="entry name" value="Aspartate/glutamate racemase"/>
    <property type="match status" value="2"/>
</dbReference>
<dbReference type="PROSITE" id="PS00923">
    <property type="entry name" value="ASP_GLU_RACEMASE_1"/>
    <property type="match status" value="1"/>
</dbReference>
<dbReference type="PROSITE" id="PS00924">
    <property type="entry name" value="ASP_GLU_RACEMASE_2"/>
    <property type="match status" value="1"/>
</dbReference>
<comment type="function">
    <text evidence="1">Provides the (R)-glutamate required for cell wall biosynthesis.</text>
</comment>
<comment type="catalytic activity">
    <reaction evidence="1">
        <text>L-glutamate = D-glutamate</text>
        <dbReference type="Rhea" id="RHEA:12813"/>
        <dbReference type="ChEBI" id="CHEBI:29985"/>
        <dbReference type="ChEBI" id="CHEBI:29986"/>
        <dbReference type="EC" id="5.1.1.3"/>
    </reaction>
</comment>
<comment type="pathway">
    <text evidence="1">Cell wall biogenesis; peptidoglycan biosynthesis.</text>
</comment>
<comment type="similarity">
    <text evidence="1">Belongs to the aspartate/glutamate racemases family.</text>
</comment>
<evidence type="ECO:0000255" key="1">
    <source>
        <dbReference type="HAMAP-Rule" id="MF_00258"/>
    </source>
</evidence>